<dbReference type="EC" id="2.7.8.13" evidence="1"/>
<dbReference type="EMBL" id="AE009442">
    <property type="protein sequence ID" value="AAO29700.1"/>
    <property type="molecule type" value="Genomic_DNA"/>
</dbReference>
<dbReference type="RefSeq" id="WP_004084478.1">
    <property type="nucleotide sequence ID" value="NC_004556.1"/>
</dbReference>
<dbReference type="SMR" id="Q87AF7"/>
<dbReference type="GeneID" id="93905727"/>
<dbReference type="KEGG" id="xft:PD_1868"/>
<dbReference type="HOGENOM" id="CLU_023982_0_0_6"/>
<dbReference type="UniPathway" id="UPA00219"/>
<dbReference type="Proteomes" id="UP000002516">
    <property type="component" value="Chromosome"/>
</dbReference>
<dbReference type="GO" id="GO:0005886">
    <property type="term" value="C:plasma membrane"/>
    <property type="evidence" value="ECO:0007669"/>
    <property type="project" value="UniProtKB-SubCell"/>
</dbReference>
<dbReference type="GO" id="GO:0046872">
    <property type="term" value="F:metal ion binding"/>
    <property type="evidence" value="ECO:0007669"/>
    <property type="project" value="UniProtKB-KW"/>
</dbReference>
<dbReference type="GO" id="GO:0008963">
    <property type="term" value="F:phospho-N-acetylmuramoyl-pentapeptide-transferase activity"/>
    <property type="evidence" value="ECO:0007669"/>
    <property type="project" value="UniProtKB-UniRule"/>
</dbReference>
<dbReference type="GO" id="GO:0051992">
    <property type="term" value="F:UDP-N-acetylmuramoyl-L-alanyl-D-glutamyl-meso-2,6-diaminopimelyl-D-alanyl-D-alanine:undecaprenyl-phosphate transferase activity"/>
    <property type="evidence" value="ECO:0007669"/>
    <property type="project" value="RHEA"/>
</dbReference>
<dbReference type="GO" id="GO:0051301">
    <property type="term" value="P:cell division"/>
    <property type="evidence" value="ECO:0007669"/>
    <property type="project" value="UniProtKB-KW"/>
</dbReference>
<dbReference type="GO" id="GO:0071555">
    <property type="term" value="P:cell wall organization"/>
    <property type="evidence" value="ECO:0007669"/>
    <property type="project" value="UniProtKB-KW"/>
</dbReference>
<dbReference type="GO" id="GO:0009252">
    <property type="term" value="P:peptidoglycan biosynthetic process"/>
    <property type="evidence" value="ECO:0007669"/>
    <property type="project" value="UniProtKB-UniRule"/>
</dbReference>
<dbReference type="GO" id="GO:0008360">
    <property type="term" value="P:regulation of cell shape"/>
    <property type="evidence" value="ECO:0007669"/>
    <property type="project" value="UniProtKB-KW"/>
</dbReference>
<dbReference type="CDD" id="cd06852">
    <property type="entry name" value="GT_MraY"/>
    <property type="match status" value="1"/>
</dbReference>
<dbReference type="HAMAP" id="MF_00038">
    <property type="entry name" value="MraY"/>
    <property type="match status" value="1"/>
</dbReference>
<dbReference type="InterPro" id="IPR000715">
    <property type="entry name" value="Glycosyl_transferase_4"/>
</dbReference>
<dbReference type="InterPro" id="IPR003524">
    <property type="entry name" value="PNAcMuramoyl-5peptid_Trfase"/>
</dbReference>
<dbReference type="InterPro" id="IPR018480">
    <property type="entry name" value="PNAcMuramoyl-5peptid_Trfase_CS"/>
</dbReference>
<dbReference type="NCBIfam" id="TIGR00445">
    <property type="entry name" value="mraY"/>
    <property type="match status" value="1"/>
</dbReference>
<dbReference type="PANTHER" id="PTHR22926">
    <property type="entry name" value="PHOSPHO-N-ACETYLMURAMOYL-PENTAPEPTIDE-TRANSFERASE"/>
    <property type="match status" value="1"/>
</dbReference>
<dbReference type="PANTHER" id="PTHR22926:SF5">
    <property type="entry name" value="PHOSPHO-N-ACETYLMURAMOYL-PENTAPEPTIDE-TRANSFERASE HOMOLOG"/>
    <property type="match status" value="1"/>
</dbReference>
<dbReference type="Pfam" id="PF00953">
    <property type="entry name" value="Glycos_transf_4"/>
    <property type="match status" value="1"/>
</dbReference>
<dbReference type="PROSITE" id="PS01347">
    <property type="entry name" value="MRAY_1"/>
    <property type="match status" value="1"/>
</dbReference>
<dbReference type="PROSITE" id="PS01348">
    <property type="entry name" value="MRAY_2"/>
    <property type="match status" value="1"/>
</dbReference>
<gene>
    <name evidence="1" type="primary">mraY</name>
    <name type="ordered locus">PD_1868</name>
</gene>
<name>MRAY_XYLFT</name>
<evidence type="ECO:0000255" key="1">
    <source>
        <dbReference type="HAMAP-Rule" id="MF_00038"/>
    </source>
</evidence>
<organism>
    <name type="scientific">Xylella fastidiosa (strain Temecula1 / ATCC 700964)</name>
    <dbReference type="NCBI Taxonomy" id="183190"/>
    <lineage>
        <taxon>Bacteria</taxon>
        <taxon>Pseudomonadati</taxon>
        <taxon>Pseudomonadota</taxon>
        <taxon>Gammaproteobacteria</taxon>
        <taxon>Lysobacterales</taxon>
        <taxon>Lysobacteraceae</taxon>
        <taxon>Xylella</taxon>
    </lineage>
</organism>
<proteinExistence type="inferred from homology"/>
<protein>
    <recommendedName>
        <fullName evidence="1">Phospho-N-acetylmuramoyl-pentapeptide-transferase</fullName>
        <ecNumber evidence="1">2.7.8.13</ecNumber>
    </recommendedName>
    <alternativeName>
        <fullName evidence="1">UDP-MurNAc-pentapeptide phosphotransferase</fullName>
    </alternativeName>
</protein>
<accession>Q87AF7</accession>
<keyword id="KW-0131">Cell cycle</keyword>
<keyword id="KW-0132">Cell division</keyword>
<keyword id="KW-0997">Cell inner membrane</keyword>
<keyword id="KW-1003">Cell membrane</keyword>
<keyword id="KW-0133">Cell shape</keyword>
<keyword id="KW-0961">Cell wall biogenesis/degradation</keyword>
<keyword id="KW-0460">Magnesium</keyword>
<keyword id="KW-0472">Membrane</keyword>
<keyword id="KW-0479">Metal-binding</keyword>
<keyword id="KW-0573">Peptidoglycan synthesis</keyword>
<keyword id="KW-1185">Reference proteome</keyword>
<keyword id="KW-0808">Transferase</keyword>
<keyword id="KW-0812">Transmembrane</keyword>
<keyword id="KW-1133">Transmembrane helix</keyword>
<comment type="function">
    <text evidence="1">Catalyzes the initial step of the lipid cycle reactions in the biosynthesis of the cell wall peptidoglycan: transfers peptidoglycan precursor phospho-MurNAc-pentapeptide from UDP-MurNAc-pentapeptide onto the lipid carrier undecaprenyl phosphate, yielding undecaprenyl-pyrophosphoryl-MurNAc-pentapeptide, known as lipid I.</text>
</comment>
<comment type="catalytic activity">
    <reaction evidence="1">
        <text>UDP-N-acetyl-alpha-D-muramoyl-L-alanyl-gamma-D-glutamyl-meso-2,6-diaminopimeloyl-D-alanyl-D-alanine + di-trans,octa-cis-undecaprenyl phosphate = di-trans,octa-cis-undecaprenyl diphospho-N-acetyl-alpha-D-muramoyl-L-alanyl-D-glutamyl-meso-2,6-diaminopimeloyl-D-alanyl-D-alanine + UMP</text>
        <dbReference type="Rhea" id="RHEA:28386"/>
        <dbReference type="ChEBI" id="CHEBI:57865"/>
        <dbReference type="ChEBI" id="CHEBI:60392"/>
        <dbReference type="ChEBI" id="CHEBI:61386"/>
        <dbReference type="ChEBI" id="CHEBI:61387"/>
        <dbReference type="EC" id="2.7.8.13"/>
    </reaction>
</comment>
<comment type="cofactor">
    <cofactor evidence="1">
        <name>Mg(2+)</name>
        <dbReference type="ChEBI" id="CHEBI:18420"/>
    </cofactor>
</comment>
<comment type="pathway">
    <text evidence="1">Cell wall biogenesis; peptidoglycan biosynthesis.</text>
</comment>
<comment type="subcellular location">
    <subcellularLocation>
        <location evidence="1">Cell inner membrane</location>
        <topology evidence="1">Multi-pass membrane protein</topology>
    </subcellularLocation>
</comment>
<comment type="similarity">
    <text evidence="1">Belongs to the glycosyltransferase 4 family. MraY subfamily.</text>
</comment>
<feature type="chain" id="PRO_0000108933" description="Phospho-N-acetylmuramoyl-pentapeptide-transferase">
    <location>
        <begin position="1"/>
        <end position="361"/>
    </location>
</feature>
<feature type="transmembrane region" description="Helical" evidence="1">
    <location>
        <begin position="26"/>
        <end position="46"/>
    </location>
</feature>
<feature type="transmembrane region" description="Helical" evidence="1">
    <location>
        <begin position="73"/>
        <end position="93"/>
    </location>
</feature>
<feature type="transmembrane region" description="Helical" evidence="1">
    <location>
        <begin position="98"/>
        <end position="118"/>
    </location>
</feature>
<feature type="transmembrane region" description="Helical" evidence="1">
    <location>
        <begin position="139"/>
        <end position="159"/>
    </location>
</feature>
<feature type="transmembrane region" description="Helical" evidence="1">
    <location>
        <begin position="168"/>
        <end position="188"/>
    </location>
</feature>
<feature type="transmembrane region" description="Helical" evidence="1">
    <location>
        <begin position="200"/>
        <end position="220"/>
    </location>
</feature>
<feature type="transmembrane region" description="Helical" evidence="1">
    <location>
        <begin position="237"/>
        <end position="257"/>
    </location>
</feature>
<feature type="transmembrane region" description="Helical" evidence="1">
    <location>
        <begin position="264"/>
        <end position="284"/>
    </location>
</feature>
<feature type="transmembrane region" description="Helical" evidence="1">
    <location>
        <begin position="289"/>
        <end position="309"/>
    </location>
</feature>
<feature type="transmembrane region" description="Helical" evidence="1">
    <location>
        <begin position="339"/>
        <end position="359"/>
    </location>
</feature>
<reference key="1">
    <citation type="journal article" date="2003" name="J. Bacteriol.">
        <title>Comparative analyses of the complete genome sequences of Pierce's disease and citrus variegated chlorosis strains of Xylella fastidiosa.</title>
        <authorList>
            <person name="Van Sluys M.A."/>
            <person name="de Oliveira M.C."/>
            <person name="Monteiro-Vitorello C.B."/>
            <person name="Miyaki C.Y."/>
            <person name="Furlan L.R."/>
            <person name="Camargo L.E.A."/>
            <person name="da Silva A.C.R."/>
            <person name="Moon D.H."/>
            <person name="Takita M.A."/>
            <person name="Lemos E.G.M."/>
            <person name="Machado M.A."/>
            <person name="Ferro M.I.T."/>
            <person name="da Silva F.R."/>
            <person name="Goldman M.H.S."/>
            <person name="Goldman G.H."/>
            <person name="Lemos M.V.F."/>
            <person name="El-Dorry H."/>
            <person name="Tsai S.M."/>
            <person name="Carrer H."/>
            <person name="Carraro D.M."/>
            <person name="de Oliveira R.C."/>
            <person name="Nunes L.R."/>
            <person name="Siqueira W.J."/>
            <person name="Coutinho L.L."/>
            <person name="Kimura E.T."/>
            <person name="Ferro E.S."/>
            <person name="Harakava R."/>
            <person name="Kuramae E.E."/>
            <person name="Marino C.L."/>
            <person name="Giglioti E."/>
            <person name="Abreu I.L."/>
            <person name="Alves L.M.C."/>
            <person name="do Amaral A.M."/>
            <person name="Baia G.S."/>
            <person name="Blanco S.R."/>
            <person name="Brito M.S."/>
            <person name="Cannavan F.S."/>
            <person name="Celestino A.V."/>
            <person name="da Cunha A.F."/>
            <person name="Fenille R.C."/>
            <person name="Ferro J.A."/>
            <person name="Formighieri E.F."/>
            <person name="Kishi L.T."/>
            <person name="Leoni S.G."/>
            <person name="Oliveira A.R."/>
            <person name="Rosa V.E. Jr."/>
            <person name="Sassaki F.T."/>
            <person name="Sena J.A.D."/>
            <person name="de Souza A.A."/>
            <person name="Truffi D."/>
            <person name="Tsukumo F."/>
            <person name="Yanai G.M."/>
            <person name="Zaros L.G."/>
            <person name="Civerolo E.L."/>
            <person name="Simpson A.J.G."/>
            <person name="Almeida N.F. Jr."/>
            <person name="Setubal J.C."/>
            <person name="Kitajima J.P."/>
        </authorList>
    </citation>
    <scope>NUCLEOTIDE SEQUENCE [LARGE SCALE GENOMIC DNA]</scope>
    <source>
        <strain>Temecula1 / ATCC 700964</strain>
    </source>
</reference>
<sequence>MLFEFARWLQQFESLFGLFNYLTFRSILAALTALFLSLWIGPVLIQKLSQFKGGQPIRQDGPKMHFSKAGTPTMGGSLILMTVTLSVLLWGDLRNRYVWLVLVVMLAFGAIGWYDDWIKLARRDPNGLKSRWKYLLQSIFGLAAGLFLYFTADVPAAVTFYIPMFKSIALPLTSISFVAITYFWIVGFSNAVNLTDGLDGLAIMPTVLVACALGVFAYASGNTLFSSYLKIPTIPGAGDLIIICAAIAGAGLGFLWFNAYPAMVFMGDIGALALGAVLGTIAVIVRQELVLVVMGGVFVIETLSVIIQVTSFKLTGKRVFRMAPIHHHFELKGWPEPRVIVRFWIISVVLVLVGLATLKVR</sequence>